<feature type="chain" id="PRO_0000406778" description="Exocyst complex component 6B">
    <location>
        <begin position="1"/>
        <end position="810"/>
    </location>
</feature>
<feature type="region of interest" description="Disordered" evidence="3">
    <location>
        <begin position="258"/>
        <end position="282"/>
    </location>
</feature>
<feature type="coiled-coil region" evidence="2">
    <location>
        <begin position="79"/>
        <end position="118"/>
    </location>
</feature>
<feature type="compositionally biased region" description="Acidic residues" evidence="3">
    <location>
        <begin position="272"/>
        <end position="282"/>
    </location>
</feature>
<feature type="splice variant" id="VSP_040840" description="In isoform 2." evidence="4 5">
    <original>GKVAQTACMSACKHLATSL</original>
    <variation>VSDSSSILPFKVGNPCLTL</variation>
    <location>
        <begin position="660"/>
        <end position="678"/>
    </location>
</feature>
<feature type="splice variant" id="VSP_040841" description="In isoform 2." evidence="4 5">
    <location>
        <begin position="679"/>
        <end position="810"/>
    </location>
</feature>
<comment type="function">
    <text evidence="1">Component of the exocyst complex involved in the docking of exocytic vesicles with fusion sites on the plasma membrane.</text>
</comment>
<comment type="subunit">
    <text evidence="1">The exocyst complex is composed of SEC3, SEC5, SEC6, SEC8, SEC10, SEC15, EXO70 and EXO84.</text>
</comment>
<comment type="alternative products">
    <event type="alternative splicing"/>
    <isoform>
        <id>A6H5Z3-1</id>
        <name>1</name>
        <sequence type="displayed"/>
    </isoform>
    <isoform>
        <id>A6H5Z3-2</id>
        <name>2</name>
        <sequence type="described" ref="VSP_040840 VSP_040841"/>
    </isoform>
</comment>
<comment type="similarity">
    <text evidence="6">Belongs to the SEC15 family.</text>
</comment>
<dbReference type="EMBL" id="AK144547">
    <property type="protein sequence ID" value="BAE25933.1"/>
    <property type="molecule type" value="mRNA"/>
</dbReference>
<dbReference type="EMBL" id="CH466523">
    <property type="protein sequence ID" value="EDK99119.1"/>
    <property type="molecule type" value="Genomic_DNA"/>
</dbReference>
<dbReference type="EMBL" id="BC144781">
    <property type="protein sequence ID" value="AAI44782.1"/>
    <property type="molecule type" value="mRNA"/>
</dbReference>
<dbReference type="EMBL" id="BC145693">
    <property type="protein sequence ID" value="AAI45694.1"/>
    <property type="molecule type" value="mRNA"/>
</dbReference>
<dbReference type="CCDS" id="CCDS51824.1">
    <molecule id="A6H5Z3-1"/>
</dbReference>
<dbReference type="RefSeq" id="NP_796051.2">
    <molecule id="A6H5Z3-1"/>
    <property type="nucleotide sequence ID" value="NM_177077.2"/>
</dbReference>
<dbReference type="SMR" id="A6H5Z3"/>
<dbReference type="BioGRID" id="217843">
    <property type="interactions" value="1"/>
</dbReference>
<dbReference type="ComplexPortal" id="CPX-4983">
    <property type="entry name" value="Exocyst, Exoc6b variant"/>
</dbReference>
<dbReference type="FunCoup" id="A6H5Z3">
    <property type="interactions" value="1232"/>
</dbReference>
<dbReference type="STRING" id="10090.ENSMUSP00000125312"/>
<dbReference type="GlyGen" id="A6H5Z3">
    <property type="glycosylation" value="1 site, 1 O-linked glycan (1 site)"/>
</dbReference>
<dbReference type="iPTMnet" id="A6H5Z3"/>
<dbReference type="PhosphoSitePlus" id="A6H5Z3"/>
<dbReference type="SwissPalm" id="A6H5Z3"/>
<dbReference type="jPOST" id="A6H5Z3"/>
<dbReference type="PaxDb" id="10090-ENSMUSP00000125312"/>
<dbReference type="PeptideAtlas" id="A6H5Z3"/>
<dbReference type="ProteomicsDB" id="275952">
    <molecule id="A6H5Z3-1"/>
</dbReference>
<dbReference type="ProteomicsDB" id="275953">
    <molecule id="A6H5Z3-2"/>
</dbReference>
<dbReference type="Pumba" id="A6H5Z3"/>
<dbReference type="Antibodypedia" id="56922">
    <property type="antibodies" value="61 antibodies from 15 providers"/>
</dbReference>
<dbReference type="Ensembl" id="ENSMUST00000160197.6">
    <molecule id="A6H5Z3-1"/>
    <property type="protein sequence ID" value="ENSMUSP00000125312.2"/>
    <property type="gene ID" value="ENSMUSG00000033769.17"/>
</dbReference>
<dbReference type="GeneID" id="75914"/>
<dbReference type="KEGG" id="mmu:75914"/>
<dbReference type="UCSC" id="uc009cpa.2">
    <molecule id="A6H5Z3-1"/>
    <property type="organism name" value="mouse"/>
</dbReference>
<dbReference type="UCSC" id="uc009cpb.2">
    <molecule id="A6H5Z3-2"/>
    <property type="organism name" value="mouse"/>
</dbReference>
<dbReference type="AGR" id="MGI:1923164"/>
<dbReference type="CTD" id="23233"/>
<dbReference type="MGI" id="MGI:1923164">
    <property type="gene designation" value="Exoc6b"/>
</dbReference>
<dbReference type="VEuPathDB" id="HostDB:ENSMUSG00000033769"/>
<dbReference type="eggNOG" id="KOG2176">
    <property type="taxonomic scope" value="Eukaryota"/>
</dbReference>
<dbReference type="GeneTree" id="ENSGT00390000005739"/>
<dbReference type="HOGENOM" id="CLU_009437_0_0_1"/>
<dbReference type="InParanoid" id="A6H5Z3"/>
<dbReference type="OMA" id="NAVMGIN"/>
<dbReference type="OrthoDB" id="10267033at2759"/>
<dbReference type="PhylomeDB" id="A6H5Z3"/>
<dbReference type="TreeFam" id="TF315199"/>
<dbReference type="BioGRID-ORCS" id="75914">
    <property type="hits" value="2 hits in 77 CRISPR screens"/>
</dbReference>
<dbReference type="CD-CODE" id="CE726F99">
    <property type="entry name" value="Postsynaptic density"/>
</dbReference>
<dbReference type="ChiTaRS" id="Exoc6b">
    <property type="organism name" value="mouse"/>
</dbReference>
<dbReference type="PRO" id="PR:A6H5Z3"/>
<dbReference type="Proteomes" id="UP000000589">
    <property type="component" value="Chromosome 6"/>
</dbReference>
<dbReference type="RNAct" id="A6H5Z3">
    <property type="molecule type" value="protein"/>
</dbReference>
<dbReference type="Bgee" id="ENSMUSG00000033769">
    <property type="expression patterns" value="Expressed in ear vesicle and 187 other cell types or tissues"/>
</dbReference>
<dbReference type="ExpressionAtlas" id="A6H5Z3">
    <property type="expression patterns" value="baseline and differential"/>
</dbReference>
<dbReference type="GO" id="GO:0000145">
    <property type="term" value="C:exocyst"/>
    <property type="evidence" value="ECO:0000303"/>
    <property type="project" value="ComplexPortal"/>
</dbReference>
<dbReference type="GO" id="GO:0006886">
    <property type="term" value="P:intracellular protein transport"/>
    <property type="evidence" value="ECO:0007669"/>
    <property type="project" value="InterPro"/>
</dbReference>
<dbReference type="GO" id="GO:0090148">
    <property type="term" value="P:membrane fission"/>
    <property type="evidence" value="ECO:0000303"/>
    <property type="project" value="ComplexPortal"/>
</dbReference>
<dbReference type="GO" id="GO:0000281">
    <property type="term" value="P:mitotic cytokinesis"/>
    <property type="evidence" value="ECO:0000303"/>
    <property type="project" value="ComplexPortal"/>
</dbReference>
<dbReference type="GO" id="GO:0006904">
    <property type="term" value="P:vesicle docking involved in exocytosis"/>
    <property type="evidence" value="ECO:0000303"/>
    <property type="project" value="ComplexPortal"/>
</dbReference>
<dbReference type="GO" id="GO:0090522">
    <property type="term" value="P:vesicle tethering involved in exocytosis"/>
    <property type="evidence" value="ECO:0000303"/>
    <property type="project" value="ComplexPortal"/>
</dbReference>
<dbReference type="FunFam" id="1.10.357.30:FF:000001">
    <property type="entry name" value="Exocyst complex component"/>
    <property type="match status" value="1"/>
</dbReference>
<dbReference type="FunFam" id="1.20.58.670:FF:000001">
    <property type="entry name" value="Exocyst complex component"/>
    <property type="match status" value="1"/>
</dbReference>
<dbReference type="Gene3D" id="1.20.58.670">
    <property type="entry name" value="Dsl1p vesicle tethering complex, Tip20p subunit, domain D"/>
    <property type="match status" value="1"/>
</dbReference>
<dbReference type="Gene3D" id="1.10.357.30">
    <property type="entry name" value="Exocyst complex subunit Sec15 C-terminal domain, N-terminal subdomain"/>
    <property type="match status" value="1"/>
</dbReference>
<dbReference type="InterPro" id="IPR007225">
    <property type="entry name" value="EXOC6/Sec15"/>
</dbReference>
<dbReference type="InterPro" id="IPR046361">
    <property type="entry name" value="EXOC6/Sec15_C"/>
</dbReference>
<dbReference type="InterPro" id="IPR042045">
    <property type="entry name" value="EXOC6/Sec15_C_dom1"/>
</dbReference>
<dbReference type="InterPro" id="IPR048359">
    <property type="entry name" value="EXOC6_Sec15_N"/>
</dbReference>
<dbReference type="InterPro" id="IPR042044">
    <property type="entry name" value="EXOC6PINT-1/Sec15/Tip20_C_dom2"/>
</dbReference>
<dbReference type="PANTHER" id="PTHR12702:SF3">
    <property type="entry name" value="EXOCYST COMPLEX COMPONENT 6B"/>
    <property type="match status" value="1"/>
</dbReference>
<dbReference type="PANTHER" id="PTHR12702">
    <property type="entry name" value="SEC15"/>
    <property type="match status" value="1"/>
</dbReference>
<dbReference type="Pfam" id="PF20651">
    <property type="entry name" value="EXOC6_Sec15_N"/>
    <property type="match status" value="1"/>
</dbReference>
<dbReference type="Pfam" id="PF04091">
    <property type="entry name" value="Sec15_C"/>
    <property type="match status" value="1"/>
</dbReference>
<dbReference type="PIRSF" id="PIRSF025007">
    <property type="entry name" value="Sec15"/>
    <property type="match status" value="1"/>
</dbReference>
<evidence type="ECO:0000250" key="1"/>
<evidence type="ECO:0000255" key="2"/>
<evidence type="ECO:0000256" key="3">
    <source>
        <dbReference type="SAM" id="MobiDB-lite"/>
    </source>
</evidence>
<evidence type="ECO:0000303" key="4">
    <source>
    </source>
</evidence>
<evidence type="ECO:0000303" key="5">
    <source>
    </source>
</evidence>
<evidence type="ECO:0000305" key="6"/>
<protein>
    <recommendedName>
        <fullName>Exocyst complex component 6B</fullName>
    </recommendedName>
    <alternativeName>
        <fullName>Exocyst complex component Sec15B</fullName>
    </alternativeName>
    <alternativeName>
        <fullName>SEC15-like protein 2</fullName>
    </alternativeName>
</protein>
<reference key="1">
    <citation type="journal article" date="2005" name="Science">
        <title>The transcriptional landscape of the mammalian genome.</title>
        <authorList>
            <person name="Carninci P."/>
            <person name="Kasukawa T."/>
            <person name="Katayama S."/>
            <person name="Gough J."/>
            <person name="Frith M.C."/>
            <person name="Maeda N."/>
            <person name="Oyama R."/>
            <person name="Ravasi T."/>
            <person name="Lenhard B."/>
            <person name="Wells C."/>
            <person name="Kodzius R."/>
            <person name="Shimokawa K."/>
            <person name="Bajic V.B."/>
            <person name="Brenner S.E."/>
            <person name="Batalov S."/>
            <person name="Forrest A.R."/>
            <person name="Zavolan M."/>
            <person name="Davis M.J."/>
            <person name="Wilming L.G."/>
            <person name="Aidinis V."/>
            <person name="Allen J.E."/>
            <person name="Ambesi-Impiombato A."/>
            <person name="Apweiler R."/>
            <person name="Aturaliya R.N."/>
            <person name="Bailey T.L."/>
            <person name="Bansal M."/>
            <person name="Baxter L."/>
            <person name="Beisel K.W."/>
            <person name="Bersano T."/>
            <person name="Bono H."/>
            <person name="Chalk A.M."/>
            <person name="Chiu K.P."/>
            <person name="Choudhary V."/>
            <person name="Christoffels A."/>
            <person name="Clutterbuck D.R."/>
            <person name="Crowe M.L."/>
            <person name="Dalla E."/>
            <person name="Dalrymple B.P."/>
            <person name="de Bono B."/>
            <person name="Della Gatta G."/>
            <person name="di Bernardo D."/>
            <person name="Down T."/>
            <person name="Engstrom P."/>
            <person name="Fagiolini M."/>
            <person name="Faulkner G."/>
            <person name="Fletcher C.F."/>
            <person name="Fukushima T."/>
            <person name="Furuno M."/>
            <person name="Futaki S."/>
            <person name="Gariboldi M."/>
            <person name="Georgii-Hemming P."/>
            <person name="Gingeras T.R."/>
            <person name="Gojobori T."/>
            <person name="Green R.E."/>
            <person name="Gustincich S."/>
            <person name="Harbers M."/>
            <person name="Hayashi Y."/>
            <person name="Hensch T.K."/>
            <person name="Hirokawa N."/>
            <person name="Hill D."/>
            <person name="Huminiecki L."/>
            <person name="Iacono M."/>
            <person name="Ikeo K."/>
            <person name="Iwama A."/>
            <person name="Ishikawa T."/>
            <person name="Jakt M."/>
            <person name="Kanapin A."/>
            <person name="Katoh M."/>
            <person name="Kawasawa Y."/>
            <person name="Kelso J."/>
            <person name="Kitamura H."/>
            <person name="Kitano H."/>
            <person name="Kollias G."/>
            <person name="Krishnan S.P."/>
            <person name="Kruger A."/>
            <person name="Kummerfeld S.K."/>
            <person name="Kurochkin I.V."/>
            <person name="Lareau L.F."/>
            <person name="Lazarevic D."/>
            <person name="Lipovich L."/>
            <person name="Liu J."/>
            <person name="Liuni S."/>
            <person name="McWilliam S."/>
            <person name="Madan Babu M."/>
            <person name="Madera M."/>
            <person name="Marchionni L."/>
            <person name="Matsuda H."/>
            <person name="Matsuzawa S."/>
            <person name="Miki H."/>
            <person name="Mignone F."/>
            <person name="Miyake S."/>
            <person name="Morris K."/>
            <person name="Mottagui-Tabar S."/>
            <person name="Mulder N."/>
            <person name="Nakano N."/>
            <person name="Nakauchi H."/>
            <person name="Ng P."/>
            <person name="Nilsson R."/>
            <person name="Nishiguchi S."/>
            <person name="Nishikawa S."/>
            <person name="Nori F."/>
            <person name="Ohara O."/>
            <person name="Okazaki Y."/>
            <person name="Orlando V."/>
            <person name="Pang K.C."/>
            <person name="Pavan W.J."/>
            <person name="Pavesi G."/>
            <person name="Pesole G."/>
            <person name="Petrovsky N."/>
            <person name="Piazza S."/>
            <person name="Reed J."/>
            <person name="Reid J.F."/>
            <person name="Ring B.Z."/>
            <person name="Ringwald M."/>
            <person name="Rost B."/>
            <person name="Ruan Y."/>
            <person name="Salzberg S.L."/>
            <person name="Sandelin A."/>
            <person name="Schneider C."/>
            <person name="Schoenbach C."/>
            <person name="Sekiguchi K."/>
            <person name="Semple C.A."/>
            <person name="Seno S."/>
            <person name="Sessa L."/>
            <person name="Sheng Y."/>
            <person name="Shibata Y."/>
            <person name="Shimada H."/>
            <person name="Shimada K."/>
            <person name="Silva D."/>
            <person name="Sinclair B."/>
            <person name="Sperling S."/>
            <person name="Stupka E."/>
            <person name="Sugiura K."/>
            <person name="Sultana R."/>
            <person name="Takenaka Y."/>
            <person name="Taki K."/>
            <person name="Tammoja K."/>
            <person name="Tan S.L."/>
            <person name="Tang S."/>
            <person name="Taylor M.S."/>
            <person name="Tegner J."/>
            <person name="Teichmann S.A."/>
            <person name="Ueda H.R."/>
            <person name="van Nimwegen E."/>
            <person name="Verardo R."/>
            <person name="Wei C.L."/>
            <person name="Yagi K."/>
            <person name="Yamanishi H."/>
            <person name="Zabarovsky E."/>
            <person name="Zhu S."/>
            <person name="Zimmer A."/>
            <person name="Hide W."/>
            <person name="Bult C."/>
            <person name="Grimmond S.M."/>
            <person name="Teasdale R.D."/>
            <person name="Liu E.T."/>
            <person name="Brusic V."/>
            <person name="Quackenbush J."/>
            <person name="Wahlestedt C."/>
            <person name="Mattick J.S."/>
            <person name="Hume D.A."/>
            <person name="Kai C."/>
            <person name="Sasaki D."/>
            <person name="Tomaru Y."/>
            <person name="Fukuda S."/>
            <person name="Kanamori-Katayama M."/>
            <person name="Suzuki M."/>
            <person name="Aoki J."/>
            <person name="Arakawa T."/>
            <person name="Iida J."/>
            <person name="Imamura K."/>
            <person name="Itoh M."/>
            <person name="Kato T."/>
            <person name="Kawaji H."/>
            <person name="Kawagashira N."/>
            <person name="Kawashima T."/>
            <person name="Kojima M."/>
            <person name="Kondo S."/>
            <person name="Konno H."/>
            <person name="Nakano K."/>
            <person name="Ninomiya N."/>
            <person name="Nishio T."/>
            <person name="Okada M."/>
            <person name="Plessy C."/>
            <person name="Shibata K."/>
            <person name="Shiraki T."/>
            <person name="Suzuki S."/>
            <person name="Tagami M."/>
            <person name="Waki K."/>
            <person name="Watahiki A."/>
            <person name="Okamura-Oho Y."/>
            <person name="Suzuki H."/>
            <person name="Kawai J."/>
            <person name="Hayashizaki Y."/>
        </authorList>
    </citation>
    <scope>NUCLEOTIDE SEQUENCE [LARGE SCALE MRNA] (ISOFORM 2)</scope>
    <source>
        <strain>C57BL/6J</strain>
        <tissue>Lung</tissue>
    </source>
</reference>
<reference key="2">
    <citation type="submission" date="2005-07" db="EMBL/GenBank/DDBJ databases">
        <authorList>
            <person name="Mural R.J."/>
            <person name="Adams M.D."/>
            <person name="Myers E.W."/>
            <person name="Smith H.O."/>
            <person name="Venter J.C."/>
        </authorList>
    </citation>
    <scope>NUCLEOTIDE SEQUENCE [LARGE SCALE GENOMIC DNA]</scope>
</reference>
<reference key="3">
    <citation type="journal article" date="2004" name="Genome Res.">
        <title>The status, quality, and expansion of the NIH full-length cDNA project: the Mammalian Gene Collection (MGC).</title>
        <authorList>
            <consortium name="The MGC Project Team"/>
        </authorList>
    </citation>
    <scope>NUCLEOTIDE SEQUENCE [LARGE SCALE MRNA] (ISOFORM 2)</scope>
    <source>
        <tissue>Brain</tissue>
    </source>
</reference>
<reference key="4">
    <citation type="journal article" date="2010" name="Cell">
        <title>A tissue-specific atlas of mouse protein phosphorylation and expression.</title>
        <authorList>
            <person name="Huttlin E.L."/>
            <person name="Jedrychowski M.P."/>
            <person name="Elias J.E."/>
            <person name="Goswami T."/>
            <person name="Rad R."/>
            <person name="Beausoleil S.A."/>
            <person name="Villen J."/>
            <person name="Haas W."/>
            <person name="Sowa M.E."/>
            <person name="Gygi S.P."/>
        </authorList>
    </citation>
    <scope>IDENTIFICATION BY MASS SPECTROMETRY [LARGE SCALE ANALYSIS]</scope>
    <source>
        <tissue>Brain</tissue>
        <tissue>Kidney</tissue>
        <tissue>Lung</tissue>
        <tissue>Spleen</tissue>
        <tissue>Testis</tissue>
    </source>
</reference>
<sequence>MERAKMAEESLETAAEHERILREIESTDTACIGPTLRSVYDGEEHGRFMEKLETRIRNHDREIEKMCNFHYQGFVDSITELLKVRGEAQKLKNQVTDTNRKLQHEGKELVIAMEELKQCRLQQRNISATVDKLMLCLPVLEMYSKLRDQMKTKRHYPALKTLEHLEHTYLPQVSHYRFCKVMVDNIPKLREEIKDVSMSDLKDFLESIRKHSDKIGETAMKQAQQQRNLDNIVLQQPRIGSKRKSKKDVYTIFDAEVESTSPKSEQDSGILDVEDEEDDEEVPGAQDLVDFSPVYRCLHIYSVLGARETFENYYRKQRRKQARLVLQPPSNMHETLDGYRKYFNQIVGFFVVEDHILHTTQGLVNRAYIDELWEMALSKTIAALRTHSSYCSDPNLVLDLKNLIVLFADTLQVYGFPVNQLFDMLLEIRDQYSETLLKKWAGVFRNILDSDNYSPIPVTSEETYKKVVGQFPFQDIELEKQPFPKKFPFSEFVPKVYNQIKEFIYACLKFSEDLHLSSTEVDDMIRKSTNLLLTRTLSNSLQNVIKRKNIGLTELVQIIINTTHLEKSCKYLEEFITNITNVLPETVHTTKLYGTTTFKDARHAAEEEIYTNLNQKIDQFLQLADYDWMTGDLDNKASDYLVDLIAFLRSTFAVFTHLPGKVAQTACMSACKHLATSLMQLLLEAEVRQLTLGALQQFNLDVRECEQFARSGPVPGFQEDTLQLAFIDLRQLLDLFIQWDWSTYLADYGQPNCKYLRVNPVTALTLLEKMKDTSRKNNMFAQFRKNERDKQKLIDTVAKQLRGLISSHHS</sequence>
<name>EXC6B_MOUSE</name>
<keyword id="KW-0025">Alternative splicing</keyword>
<keyword id="KW-0175">Coiled coil</keyword>
<keyword id="KW-0268">Exocytosis</keyword>
<keyword id="KW-1185">Reference proteome</keyword>
<keyword id="KW-0813">Transport</keyword>
<accession>A6H5Z3</accession>
<accession>Q3UN15</accession>
<proteinExistence type="evidence at protein level"/>
<organism>
    <name type="scientific">Mus musculus</name>
    <name type="common">Mouse</name>
    <dbReference type="NCBI Taxonomy" id="10090"/>
    <lineage>
        <taxon>Eukaryota</taxon>
        <taxon>Metazoa</taxon>
        <taxon>Chordata</taxon>
        <taxon>Craniata</taxon>
        <taxon>Vertebrata</taxon>
        <taxon>Euteleostomi</taxon>
        <taxon>Mammalia</taxon>
        <taxon>Eutheria</taxon>
        <taxon>Euarchontoglires</taxon>
        <taxon>Glires</taxon>
        <taxon>Rodentia</taxon>
        <taxon>Myomorpha</taxon>
        <taxon>Muroidea</taxon>
        <taxon>Muridae</taxon>
        <taxon>Murinae</taxon>
        <taxon>Mus</taxon>
        <taxon>Mus</taxon>
    </lineage>
</organism>
<gene>
    <name type="primary">Exoc6b</name>
    <name type="synonym">Sec15b</name>
    <name type="synonym">Sec15l2</name>
</gene>